<keyword id="KW-0020">Allergen</keyword>
<keyword id="KW-1015">Disulfide bond</keyword>
<keyword id="KW-1185">Reference proteome</keyword>
<keyword id="KW-0964">Secreted</keyword>
<keyword id="KW-0708">Seed storage protein</keyword>
<keyword id="KW-0732">Signal</keyword>
<keyword id="KW-0758">Storage protein</keyword>
<name>RA05_ORYSJ</name>
<organism>
    <name type="scientific">Oryza sativa subsp. japonica</name>
    <name type="common">Rice</name>
    <dbReference type="NCBI Taxonomy" id="39947"/>
    <lineage>
        <taxon>Eukaryota</taxon>
        <taxon>Viridiplantae</taxon>
        <taxon>Streptophyta</taxon>
        <taxon>Embryophyta</taxon>
        <taxon>Tracheophyta</taxon>
        <taxon>Spermatophyta</taxon>
        <taxon>Magnoliopsida</taxon>
        <taxon>Liliopsida</taxon>
        <taxon>Poales</taxon>
        <taxon>Poaceae</taxon>
        <taxon>BOP clade</taxon>
        <taxon>Oryzoideae</taxon>
        <taxon>Oryzeae</taxon>
        <taxon>Oryzinae</taxon>
        <taxon>Oryza</taxon>
        <taxon>Oryza sativa</taxon>
    </lineage>
</organism>
<sequence>MASNKVVFSVLLLAVVSVLAATATMAEYHHQDQVVYTPAPLCQPGMGYPMYPLPRCRALVKRQCVGRGTAAAAEQVRRDCCRQLAAVDDSWCRCEAISHMLGGIYRELGAPDVGHPMSEVFRGCRRGDLERAAASLPAFCNVDIPNGGGGVCYWLARSGY</sequence>
<proteinExistence type="evidence at protein level"/>
<dbReference type="EMBL" id="D11430">
    <property type="protein sequence ID" value="BAA01996.1"/>
    <property type="molecule type" value="mRNA"/>
</dbReference>
<dbReference type="EMBL" id="D42142">
    <property type="protein sequence ID" value="BAA07713.1"/>
    <property type="molecule type" value="mRNA"/>
</dbReference>
<dbReference type="EMBL" id="AP003963">
    <property type="protein sequence ID" value="BAC19997.1"/>
    <property type="molecule type" value="Genomic_DNA"/>
</dbReference>
<dbReference type="EMBL" id="AP014963">
    <property type="status" value="NOT_ANNOTATED_CDS"/>
    <property type="molecule type" value="Genomic_DNA"/>
</dbReference>
<dbReference type="PIR" id="S31078">
    <property type="entry name" value="S31078"/>
</dbReference>
<dbReference type="PIR" id="S59925">
    <property type="entry name" value="S59925"/>
</dbReference>
<dbReference type="RefSeq" id="XP_015644725.1">
    <property type="nucleotide sequence ID" value="XM_015789239.1"/>
</dbReference>
<dbReference type="SMR" id="Q01881"/>
<dbReference type="FunCoup" id="Q01881">
    <property type="interactions" value="169"/>
</dbReference>
<dbReference type="Allergome" id="1049">
    <property type="allergen name" value="Ory s aA_TI"/>
</dbReference>
<dbReference type="PaxDb" id="39947-Q01881"/>
<dbReference type="eggNOG" id="ENOG502R43K">
    <property type="taxonomic scope" value="Eukaryota"/>
</dbReference>
<dbReference type="InParanoid" id="Q01881"/>
<dbReference type="OrthoDB" id="580739at2759"/>
<dbReference type="Proteomes" id="UP000000763">
    <property type="component" value="Chromosome 7"/>
</dbReference>
<dbReference type="Proteomes" id="UP000059680">
    <property type="component" value="Chromosome 7"/>
</dbReference>
<dbReference type="GO" id="GO:0005576">
    <property type="term" value="C:extracellular region"/>
    <property type="evidence" value="ECO:0007669"/>
    <property type="project" value="UniProtKB-SubCell"/>
</dbReference>
<dbReference type="GO" id="GO:0019863">
    <property type="term" value="F:IgE binding"/>
    <property type="evidence" value="ECO:0000314"/>
    <property type="project" value="UniProtKB"/>
</dbReference>
<dbReference type="GO" id="GO:0045735">
    <property type="term" value="F:nutrient reservoir activity"/>
    <property type="evidence" value="ECO:0007669"/>
    <property type="project" value="UniProtKB-KW"/>
</dbReference>
<dbReference type="GO" id="GO:0004867">
    <property type="term" value="F:serine-type endopeptidase inhibitor activity"/>
    <property type="evidence" value="ECO:0000250"/>
    <property type="project" value="Gramene"/>
</dbReference>
<dbReference type="CDD" id="cd00261">
    <property type="entry name" value="AAI_SS"/>
    <property type="match status" value="1"/>
</dbReference>
<dbReference type="FunFam" id="1.10.110.10:FF:000004">
    <property type="entry name" value="Alpha-amylase inhibitor 0.19"/>
    <property type="match status" value="1"/>
</dbReference>
<dbReference type="Gene3D" id="1.10.110.10">
    <property type="entry name" value="Plant lipid-transfer and hydrophobic proteins"/>
    <property type="match status" value="1"/>
</dbReference>
<dbReference type="InterPro" id="IPR002411">
    <property type="entry name" value="Allergen/amylase_inhib_rice"/>
</dbReference>
<dbReference type="InterPro" id="IPR006106">
    <property type="entry name" value="Allergen/soft/tryp_amyl_inhib"/>
</dbReference>
<dbReference type="InterPro" id="IPR006105">
    <property type="entry name" value="Allergen/tryp_amyl_inhib_CS"/>
</dbReference>
<dbReference type="InterPro" id="IPR036312">
    <property type="entry name" value="Bifun_inhib/LTP/seed_sf"/>
</dbReference>
<dbReference type="InterPro" id="IPR016140">
    <property type="entry name" value="Bifunc_inhib/LTP/seed_store"/>
</dbReference>
<dbReference type="PANTHER" id="PTHR34481:SF8">
    <property type="entry name" value="SEED ALLERGENIC PROTEIN RAG1"/>
    <property type="match status" value="1"/>
</dbReference>
<dbReference type="PANTHER" id="PTHR34481">
    <property type="entry name" value="TRYPSIN/FACTOR XIIA INHIBITOR-RELATED"/>
    <property type="match status" value="1"/>
</dbReference>
<dbReference type="Pfam" id="PF00234">
    <property type="entry name" value="Tryp_alpha_amyl"/>
    <property type="match status" value="1"/>
</dbReference>
<dbReference type="PIRSF" id="PIRSF001657">
    <property type="entry name" value="Allergen/amylase_inhib"/>
    <property type="match status" value="1"/>
</dbReference>
<dbReference type="PRINTS" id="PR00808">
    <property type="entry name" value="AMLASEINHBTR"/>
</dbReference>
<dbReference type="PRINTS" id="PR00809">
    <property type="entry name" value="RAGALLERGEN"/>
</dbReference>
<dbReference type="SMART" id="SM00499">
    <property type="entry name" value="AAI"/>
    <property type="match status" value="1"/>
</dbReference>
<dbReference type="SUPFAM" id="SSF47699">
    <property type="entry name" value="Bifunctional inhibitor/lipid-transfer protein/seed storage 2S albumin"/>
    <property type="match status" value="1"/>
</dbReference>
<dbReference type="PROSITE" id="PS00426">
    <property type="entry name" value="CEREAL_TRYP_AMYL_INH"/>
    <property type="match status" value="1"/>
</dbReference>
<protein>
    <recommendedName>
        <fullName>Seed allergenic protein RA5</fullName>
    </recommendedName>
    <allergenName>Ory s aA_TI</allergenName>
</protein>
<accession>Q01881</accession>
<accession>Q40655</accession>
<accession>Q8GTK5</accession>
<feature type="signal peptide" evidence="2">
    <location>
        <begin position="1"/>
        <end position="26"/>
    </location>
</feature>
<feature type="chain" id="PRO_0000014359" description="Seed allergenic protein RA5">
    <location>
        <begin position="27"/>
        <end position="160"/>
    </location>
</feature>
<feature type="disulfide bond" evidence="1">
    <location>
        <begin position="42"/>
        <end position="92"/>
    </location>
</feature>
<feature type="disulfide bond" evidence="1">
    <location>
        <begin position="56"/>
        <end position="80"/>
    </location>
</feature>
<feature type="disulfide bond" evidence="1">
    <location>
        <begin position="64"/>
        <end position="124"/>
    </location>
</feature>
<feature type="disulfide bond" evidence="1">
    <location>
        <begin position="81"/>
        <end position="140"/>
    </location>
</feature>
<feature type="disulfide bond" evidence="1">
    <location>
        <begin position="94"/>
        <end position="152"/>
    </location>
</feature>
<feature type="sequence conflict" description="In Ref. 1; BAA01996." evidence="4" ref="1">
    <original>PAPL</original>
    <variation>RAR</variation>
    <location>
        <begin position="38"/>
        <end position="41"/>
    </location>
</feature>
<feature type="sequence conflict" description="In Ref. 1; BAA01996." evidence="4" ref="1">
    <original>P</original>
    <variation>S</variation>
    <location>
        <position position="52"/>
    </location>
</feature>
<feature type="sequence conflict" description="In Ref. 1; BAA01996." evidence="4" ref="1">
    <location>
        <begin position="65"/>
        <end position="66"/>
    </location>
</feature>
<feature type="sequence conflict" description="In Ref. 1; BAA01996." evidence="4" ref="1">
    <original>T</original>
    <variation>S</variation>
    <location>
        <position position="69"/>
    </location>
</feature>
<reference key="1">
    <citation type="journal article" date="1993" name="Plant Mol. Biol.">
        <title>Gene structure and expression of rice seed allergenic proteins belonging to the alpha-amylase/trypsin inhibitor family.</title>
        <authorList>
            <person name="Adachi T."/>
            <person name="Izumi H."/>
            <person name="Yamada T."/>
            <person name="Tanaka K."/>
            <person name="Takeuchi S."/>
            <person name="Nakamura R."/>
            <person name="Matsuda T."/>
        </authorList>
    </citation>
    <scope>NUCLEOTIDE SEQUENCE [MRNA]</scope>
    <source>
        <strain>cv. Nipponbare</strain>
        <tissue>Seed</tissue>
    </source>
</reference>
<reference key="2">
    <citation type="journal article" date="1995" name="Biochim. Biophys. Acta">
        <title>Classification of rice allergenic protein cDNAs belonging to the alpha-amylase/trypsin inhibitor gene family.</title>
        <authorList>
            <person name="Alvarez A.M."/>
            <person name="Adachi T."/>
            <person name="Nakase M."/>
            <person name="Aoki N."/>
            <person name="Nakamura R."/>
            <person name="Matsuda T."/>
        </authorList>
    </citation>
    <scope>NUCLEOTIDE SEQUENCE [MRNA]</scope>
    <source>
        <strain>cv. Nipponbare</strain>
        <tissue>Seed endosperm</tissue>
    </source>
</reference>
<reference key="3">
    <citation type="journal article" date="2005" name="Nature">
        <title>The map-based sequence of the rice genome.</title>
        <authorList>
            <consortium name="International rice genome sequencing project (IRGSP)"/>
        </authorList>
    </citation>
    <scope>NUCLEOTIDE SEQUENCE [LARGE SCALE GENOMIC DNA]</scope>
    <source>
        <strain>cv. Nipponbare</strain>
    </source>
</reference>
<reference key="4">
    <citation type="journal article" date="2013" name="Rice">
        <title>Improvement of the Oryza sativa Nipponbare reference genome using next generation sequence and optical map data.</title>
        <authorList>
            <person name="Kawahara Y."/>
            <person name="de la Bastide M."/>
            <person name="Hamilton J.P."/>
            <person name="Kanamori H."/>
            <person name="McCombie W.R."/>
            <person name="Ouyang S."/>
            <person name="Schwartz D.C."/>
            <person name="Tanaka T."/>
            <person name="Wu J."/>
            <person name="Zhou S."/>
            <person name="Childs K.L."/>
            <person name="Davidson R.M."/>
            <person name="Lin H."/>
            <person name="Quesada-Ocampo L."/>
            <person name="Vaillancourt B."/>
            <person name="Sakai H."/>
            <person name="Lee S.S."/>
            <person name="Kim J."/>
            <person name="Numa H."/>
            <person name="Itoh T."/>
            <person name="Buell C.R."/>
            <person name="Matsumoto T."/>
        </authorList>
    </citation>
    <scope>GENOME REANNOTATION</scope>
    <source>
        <strain>cv. Nipponbare</strain>
    </source>
</reference>
<reference key="5">
    <citation type="journal article" date="2013" name="J. Agric. Food Chem.">
        <title>Identification of rice proteins recognized by the IgE antibodies of patients with food allergies.</title>
        <authorList>
            <person name="Golias J."/>
            <person name="Humlova Z."/>
            <person name="Halada P."/>
            <person name="Habova V."/>
            <person name="Janatkova I."/>
            <person name="Tuckova L."/>
        </authorList>
    </citation>
    <scope>IDENTIFICATION BY MASS SPECTROMETRY</scope>
    <scope>ALLERGEN</scope>
</reference>
<gene>
    <name type="primary">RA5</name>
    <name type="ordered locus">Os07g0215500</name>
    <name type="ordered locus">LOC_Os07g11510</name>
</gene>
<comment type="function">
    <text evidence="4">Seed storage protein.</text>
</comment>
<comment type="subcellular location">
    <subcellularLocation>
        <location evidence="4">Secreted</location>
    </subcellularLocation>
</comment>
<comment type="PTM">
    <text evidence="1">Five disulfide bonds are present.</text>
</comment>
<comment type="allergen">
    <text evidence="3">Causes an allergic reaction in human. Binds to IgE.</text>
</comment>
<comment type="similarity">
    <text evidence="4">Belongs to the protease inhibitor I6 (cereal trypsin/alpha-amylase inhibitor) family.</text>
</comment>
<evidence type="ECO:0000250" key="1">
    <source>
        <dbReference type="UniProtKB" id="Q01883"/>
    </source>
</evidence>
<evidence type="ECO:0000255" key="2"/>
<evidence type="ECO:0000269" key="3">
    <source>
    </source>
</evidence>
<evidence type="ECO:0000305" key="4"/>